<proteinExistence type="evidence at protein level"/>
<sequence>MLETNKNHATAWQGFKNGRWNRHVDVREFIQLNYTLYEGNDSFLAGPTEATSKLWEQVMQLSKEERERGGMWDMDTKVASTITSHDAGYLDKDLETIVGVQTEKPFKRSMQPFGGIRMAKAACEAYGYELDEETEKIFTDYRKTHNQGVFDAYSREMLNCRKAGVITGLPDAYGRGRIIGDYRRVALYGVDFLMEEKMHDFNTMSTEMSEDVIRLREELSEQYRALKELKELGQKYGFDLSRPAENFKEAVQWLYLAYLAAIKEQNGAAMSLGRTSTFLDIYAERDLKAGVITESEVQEIIDHFIMKLRIVKFARTPDYNELFSGDPTWVTESIGGVGIDGRPLVTKNSFRFLHSLDNLGPAPEPNLTVLWSVRLPDNFKTYCAKMSIKTSSIQYENDDIMRESYGDDYGIACCVSAMTIGKQMQFFGARANLAKTLLYAINGGKDEKSGAQVGPNFEGINSEVLEYDEVFKKFDQMMDWLAGVYINSLNVIHYMHDKYSYERIEMALHDTEIVRTMATGIAGLSVAADSLSAIKYAQVKPIRNEEGLVVDFEIEGDFPKYGNNDDRVDDIAVDLVERFMTKLRSHKTYRDSEHTMSVLTITSNVVYGKKTGNTPDGRKAGEPFAPGANPMHGRDQKGALSSLSSVAKIPYDCCKDGISNTFSIVPKSLGKEPEDQNRNLTSMLDGYAMQCGHHLNINVFNRETLIDAMEHPEEYPQLTIRVSGYAVNFIKLTREQQLDVISRTFHESM</sequence>
<name>PFLB_STAAC</name>
<reference key="1">
    <citation type="journal article" date="2005" name="J. Bacteriol.">
        <title>Insights on evolution of virulence and resistance from the complete genome analysis of an early methicillin-resistant Staphylococcus aureus strain and a biofilm-producing methicillin-resistant Staphylococcus epidermidis strain.</title>
        <authorList>
            <person name="Gill S.R."/>
            <person name="Fouts D.E."/>
            <person name="Archer G.L."/>
            <person name="Mongodin E.F."/>
            <person name="DeBoy R.T."/>
            <person name="Ravel J."/>
            <person name="Paulsen I.T."/>
            <person name="Kolonay J.F."/>
            <person name="Brinkac L.M."/>
            <person name="Beanan M.J."/>
            <person name="Dodson R.J."/>
            <person name="Daugherty S.C."/>
            <person name="Madupu R."/>
            <person name="Angiuoli S.V."/>
            <person name="Durkin A.S."/>
            <person name="Haft D.H."/>
            <person name="Vamathevan J.J."/>
            <person name="Khouri H."/>
            <person name="Utterback T.R."/>
            <person name="Lee C."/>
            <person name="Dimitrov G."/>
            <person name="Jiang L."/>
            <person name="Qin H."/>
            <person name="Weidman J."/>
            <person name="Tran K."/>
            <person name="Kang K.H."/>
            <person name="Hance I.R."/>
            <person name="Nelson K.E."/>
            <person name="Fraser C.M."/>
        </authorList>
    </citation>
    <scope>NUCLEOTIDE SEQUENCE [LARGE SCALE GENOMIC DNA]</scope>
    <source>
        <strain>COL</strain>
    </source>
</reference>
<reference key="2">
    <citation type="journal article" date="2003" name="J. Bacteriol.">
        <title>Physiological characterization of a heme-deficient mutant of Staphylococcus aureus by a proteomic approach.</title>
        <authorList>
            <person name="Kohler C."/>
            <person name="von Eiff C."/>
            <person name="Peters G."/>
            <person name="Proctor R.A."/>
            <person name="Hecker M."/>
            <person name="Engelmann S."/>
        </authorList>
    </citation>
    <scope>SUBCELLULAR LOCATION</scope>
    <scope>IDENTIFICATION BY MASS SPECTROMETRY</scope>
</reference>
<evidence type="ECO:0000250" key="1">
    <source>
        <dbReference type="UniProtKB" id="P09373"/>
    </source>
</evidence>
<evidence type="ECO:0000255" key="2">
    <source>
        <dbReference type="PROSITE-ProRule" id="PRU00493"/>
    </source>
</evidence>
<evidence type="ECO:0000255" key="3">
    <source>
        <dbReference type="PROSITE-ProRule" id="PRU00887"/>
    </source>
</evidence>
<evidence type="ECO:0000269" key="4">
    <source>
    </source>
</evidence>
<evidence type="ECO:0000305" key="5"/>
<organism>
    <name type="scientific">Staphylococcus aureus (strain COL)</name>
    <dbReference type="NCBI Taxonomy" id="93062"/>
    <lineage>
        <taxon>Bacteria</taxon>
        <taxon>Bacillati</taxon>
        <taxon>Bacillota</taxon>
        <taxon>Bacilli</taxon>
        <taxon>Bacillales</taxon>
        <taxon>Staphylococcaceae</taxon>
        <taxon>Staphylococcus</taxon>
    </lineage>
</organism>
<dbReference type="EC" id="2.3.1.54" evidence="1"/>
<dbReference type="EMBL" id="CP000046">
    <property type="protein sequence ID" value="AAW37500.1"/>
    <property type="molecule type" value="Genomic_DNA"/>
</dbReference>
<dbReference type="RefSeq" id="WP_000894660.1">
    <property type="nucleotide sequence ID" value="NZ_JBGOFO010000001.1"/>
</dbReference>
<dbReference type="SMR" id="Q5HJF4"/>
<dbReference type="KEGG" id="sac:SACOL0204"/>
<dbReference type="HOGENOM" id="CLU_023898_0_0_9"/>
<dbReference type="UniPathway" id="UPA00920">
    <property type="reaction ID" value="UER00891"/>
</dbReference>
<dbReference type="Proteomes" id="UP000000530">
    <property type="component" value="Chromosome"/>
</dbReference>
<dbReference type="GO" id="GO:0005829">
    <property type="term" value="C:cytosol"/>
    <property type="evidence" value="ECO:0007669"/>
    <property type="project" value="TreeGrafter"/>
</dbReference>
<dbReference type="GO" id="GO:0008861">
    <property type="term" value="F:formate C-acetyltransferase activity"/>
    <property type="evidence" value="ECO:0007669"/>
    <property type="project" value="UniProtKB-EC"/>
</dbReference>
<dbReference type="GO" id="GO:0006006">
    <property type="term" value="P:glucose metabolic process"/>
    <property type="evidence" value="ECO:0007669"/>
    <property type="project" value="UniProtKB-KW"/>
</dbReference>
<dbReference type="CDD" id="cd01678">
    <property type="entry name" value="PFL1"/>
    <property type="match status" value="1"/>
</dbReference>
<dbReference type="FunFam" id="3.20.70.20:FF:000003">
    <property type="entry name" value="Formate acetyltransferase"/>
    <property type="match status" value="1"/>
</dbReference>
<dbReference type="Gene3D" id="3.20.70.20">
    <property type="match status" value="1"/>
</dbReference>
<dbReference type="InterPro" id="IPR050244">
    <property type="entry name" value="Auton_GlycylRad_Cofactor"/>
</dbReference>
<dbReference type="InterPro" id="IPR005949">
    <property type="entry name" value="Form_AcTrfase"/>
</dbReference>
<dbReference type="InterPro" id="IPR019777">
    <property type="entry name" value="Form_AcTrfase_GR_CS"/>
</dbReference>
<dbReference type="InterPro" id="IPR001150">
    <property type="entry name" value="Gly_radical"/>
</dbReference>
<dbReference type="InterPro" id="IPR004184">
    <property type="entry name" value="PFL_dom"/>
</dbReference>
<dbReference type="NCBIfam" id="TIGR01255">
    <property type="entry name" value="pyr_form_ly_1"/>
    <property type="match status" value="1"/>
</dbReference>
<dbReference type="PANTHER" id="PTHR30191">
    <property type="entry name" value="FORMATE ACETYLTRANSFERASE"/>
    <property type="match status" value="1"/>
</dbReference>
<dbReference type="PANTHER" id="PTHR30191:SF0">
    <property type="entry name" value="FORMATE ACETYLTRANSFERASE 1"/>
    <property type="match status" value="1"/>
</dbReference>
<dbReference type="Pfam" id="PF01228">
    <property type="entry name" value="Gly_radical"/>
    <property type="match status" value="1"/>
</dbReference>
<dbReference type="Pfam" id="PF02901">
    <property type="entry name" value="PFL-like"/>
    <property type="match status" value="1"/>
</dbReference>
<dbReference type="PIRSF" id="PIRSF000379">
    <property type="entry name" value="For_Ac_trans_1"/>
    <property type="match status" value="1"/>
</dbReference>
<dbReference type="SUPFAM" id="SSF51998">
    <property type="entry name" value="PFL-like glycyl radical enzymes"/>
    <property type="match status" value="1"/>
</dbReference>
<dbReference type="PROSITE" id="PS00850">
    <property type="entry name" value="GLY_RADICAL_1"/>
    <property type="match status" value="1"/>
</dbReference>
<dbReference type="PROSITE" id="PS51149">
    <property type="entry name" value="GLY_RADICAL_2"/>
    <property type="match status" value="1"/>
</dbReference>
<dbReference type="PROSITE" id="PS51554">
    <property type="entry name" value="PFL"/>
    <property type="match status" value="1"/>
</dbReference>
<comment type="function">
    <text evidence="1">Catalyzes the conversion of pyruvate to formate and acetyl-CoA.</text>
</comment>
<comment type="catalytic activity">
    <reaction evidence="1">
        <text>formate + acetyl-CoA = pyruvate + CoA</text>
        <dbReference type="Rhea" id="RHEA:11844"/>
        <dbReference type="ChEBI" id="CHEBI:15361"/>
        <dbReference type="ChEBI" id="CHEBI:15740"/>
        <dbReference type="ChEBI" id="CHEBI:57287"/>
        <dbReference type="ChEBI" id="CHEBI:57288"/>
        <dbReference type="EC" id="2.3.1.54"/>
    </reaction>
</comment>
<comment type="activity regulation">
    <text evidence="5">Activated by pfl-activating enzyme under anaerobic conditions via generation of an organic free radical (Probable). Exposure of activated pfl to oxygen results in a cleavage at the glycine residue harboring its organic radical with loss of the 25 C-terminal amino acids.</text>
</comment>
<comment type="pathway">
    <text>Fermentation; pyruvate fermentation; formate from pyruvate: step 1/1.</text>
</comment>
<comment type="subunit">
    <text evidence="1">Homodimer.</text>
</comment>
<comment type="subcellular location">
    <subcellularLocation>
        <location evidence="4">Cytoplasm</location>
    </subcellularLocation>
</comment>
<comment type="miscellaneous">
    <text evidence="1">Several mechanisms have been proposed based on complexes formed with substrate analogs. After activation by the glycine radical, the cysteine radical, Cys-414, can abstract hydrogen atoms from the other active site cysteine, Cys-413, and from coenzyme A, and it can also transfer hydrogen atoms to product radicals. The other active site cysteine can attack the central carbonyl of pyruvate and covalently bind the product acetyl group.</text>
</comment>
<comment type="similarity">
    <text evidence="5">Belongs to the glycyl radical enzyme (GRE) family. PFL subfamily.</text>
</comment>
<accession>Q5HJF4</accession>
<protein>
    <recommendedName>
        <fullName>Formate acetyltransferase</fullName>
        <ecNumber evidence="1">2.3.1.54</ecNumber>
    </recommendedName>
    <alternativeName>
        <fullName>Pyruvate formate-lyase</fullName>
    </alternativeName>
</protein>
<gene>
    <name type="primary">pflB</name>
    <name type="ordered locus">SACOL0204</name>
</gene>
<keyword id="KW-0012">Acyltransferase</keyword>
<keyword id="KW-0119">Carbohydrate metabolism</keyword>
<keyword id="KW-0963">Cytoplasm</keyword>
<keyword id="KW-0313">Glucose metabolism</keyword>
<keyword id="KW-0556">Organic radical</keyword>
<keyword id="KW-0808">Transferase</keyword>
<feature type="chain" id="PRO_0000271722" description="Formate acetyltransferase">
    <location>
        <begin position="1"/>
        <end position="749"/>
    </location>
</feature>
<feature type="domain" description="PFL" evidence="3">
    <location>
        <begin position="3"/>
        <end position="619"/>
    </location>
</feature>
<feature type="domain" description="Glycine radical" evidence="2">
    <location>
        <begin position="626"/>
        <end position="749"/>
    </location>
</feature>
<feature type="active site" description="S-acetylcysteine intermediate" evidence="1">
    <location>
        <position position="413"/>
    </location>
</feature>
<feature type="active site" description="Cysteine radical intermediate" evidence="1">
    <location>
        <position position="414"/>
    </location>
</feature>
<feature type="modified residue" description="Glycine radical" evidence="5">
    <location>
        <position position="724"/>
    </location>
</feature>